<organism>
    <name type="scientific">Saccharomyces cerevisiae (strain YJM789)</name>
    <name type="common">Baker's yeast</name>
    <dbReference type="NCBI Taxonomy" id="307796"/>
    <lineage>
        <taxon>Eukaryota</taxon>
        <taxon>Fungi</taxon>
        <taxon>Dikarya</taxon>
        <taxon>Ascomycota</taxon>
        <taxon>Saccharomycotina</taxon>
        <taxon>Saccharomycetes</taxon>
        <taxon>Saccharomycetales</taxon>
        <taxon>Saccharomycetaceae</taxon>
        <taxon>Saccharomyces</taxon>
    </lineage>
</organism>
<keyword id="KW-0072">Autophagy</keyword>
<keyword id="KW-0472">Membrane</keyword>
<keyword id="KW-0496">Mitochondrion</keyword>
<keyword id="KW-1000">Mitochondrion outer membrane</keyword>
<keyword id="KW-0597">Phosphoprotein</keyword>
<keyword id="KW-0812">Transmembrane</keyword>
<keyword id="KW-1133">Transmembrane helix</keyword>
<keyword id="KW-0926">Vacuole</keyword>
<reference key="1">
    <citation type="journal article" date="2007" name="Proc. Natl. Acad. Sci. U.S.A.">
        <title>Genome sequencing and comparative analysis of Saccharomyces cerevisiae strain YJM789.</title>
        <authorList>
            <person name="Wei W."/>
            <person name="McCusker J.H."/>
            <person name="Hyman R.W."/>
            <person name="Jones T."/>
            <person name="Ning Y."/>
            <person name="Cao Z."/>
            <person name="Gu Z."/>
            <person name="Bruno D."/>
            <person name="Miranda M."/>
            <person name="Nguyen M."/>
            <person name="Wilhelmy J."/>
            <person name="Komp C."/>
            <person name="Tamse R."/>
            <person name="Wang X."/>
            <person name="Jia P."/>
            <person name="Luedi P."/>
            <person name="Oefner P.J."/>
            <person name="David L."/>
            <person name="Dietrich F.S."/>
            <person name="Li Y."/>
            <person name="Davis R.W."/>
            <person name="Steinmetz L.M."/>
        </authorList>
    </citation>
    <scope>NUCLEOTIDE SEQUENCE [LARGE SCALE GENOMIC DNA]</scope>
    <source>
        <strain>YJM789</strain>
    </source>
</reference>
<evidence type="ECO:0000250" key="1"/>
<evidence type="ECO:0000250" key="2">
    <source>
        <dbReference type="UniProtKB" id="P40458"/>
    </source>
</evidence>
<evidence type="ECO:0000255" key="3"/>
<evidence type="ECO:0000256" key="4">
    <source>
        <dbReference type="SAM" id="MobiDB-lite"/>
    </source>
</evidence>
<evidence type="ECO:0000305" key="5"/>
<feature type="chain" id="PRO_0000399763" description="Autophagy-related protein 32">
    <location>
        <begin position="1"/>
        <end position="529"/>
    </location>
</feature>
<feature type="transmembrane region" description="Helical" evidence="3">
    <location>
        <begin position="389"/>
        <end position="411"/>
    </location>
</feature>
<feature type="region of interest" description="Disordered" evidence="4">
    <location>
        <begin position="1"/>
        <end position="41"/>
    </location>
</feature>
<feature type="region of interest" description="Disordered" evidence="4">
    <location>
        <begin position="345"/>
        <end position="381"/>
    </location>
</feature>
<feature type="compositionally biased region" description="Basic and acidic residues" evidence="4">
    <location>
        <begin position="1"/>
        <end position="11"/>
    </location>
</feature>
<feature type="compositionally biased region" description="Low complexity" evidence="4">
    <location>
        <begin position="12"/>
        <end position="24"/>
    </location>
</feature>
<feature type="compositionally biased region" description="Polar residues" evidence="4">
    <location>
        <begin position="25"/>
        <end position="34"/>
    </location>
</feature>
<feature type="compositionally biased region" description="Basic residues" evidence="4">
    <location>
        <begin position="370"/>
        <end position="381"/>
    </location>
</feature>
<feature type="modified residue" description="Phosphoserine" evidence="2">
    <location>
        <position position="114"/>
    </location>
</feature>
<feature type="modified residue" description="Phosphoserine" evidence="2">
    <location>
        <position position="119"/>
    </location>
</feature>
<gene>
    <name type="primary">ATG32</name>
    <name type="synonym">ECM17</name>
    <name type="ORF">SCY_2646</name>
</gene>
<dbReference type="EMBL" id="AAFW02000124">
    <property type="protein sequence ID" value="EDN61355.1"/>
    <property type="molecule type" value="Genomic_DNA"/>
</dbReference>
<dbReference type="SMR" id="A6ZVD0"/>
<dbReference type="HOGENOM" id="CLU_039418_0_0_1"/>
<dbReference type="Proteomes" id="UP000007060">
    <property type="component" value="Unassembled WGS sequence"/>
</dbReference>
<dbReference type="GO" id="GO:0005741">
    <property type="term" value="C:mitochondrial outer membrane"/>
    <property type="evidence" value="ECO:0007669"/>
    <property type="project" value="UniProtKB-SubCell"/>
</dbReference>
<dbReference type="GO" id="GO:0034045">
    <property type="term" value="C:phagophore assembly site membrane"/>
    <property type="evidence" value="ECO:0007669"/>
    <property type="project" value="UniProtKB-SubCell"/>
</dbReference>
<dbReference type="GO" id="GO:0005774">
    <property type="term" value="C:vacuolar membrane"/>
    <property type="evidence" value="ECO:0007669"/>
    <property type="project" value="UniProtKB-SubCell"/>
</dbReference>
<dbReference type="GO" id="GO:0006914">
    <property type="term" value="P:autophagy"/>
    <property type="evidence" value="ECO:0007669"/>
    <property type="project" value="UniProtKB-KW"/>
</dbReference>
<dbReference type="CDD" id="cd19929">
    <property type="entry name" value="psREC_Atg32"/>
    <property type="match status" value="1"/>
</dbReference>
<protein>
    <recommendedName>
        <fullName>Autophagy-related protein 32</fullName>
    </recommendedName>
    <alternativeName>
        <fullName>Extracellular mutant protein 37</fullName>
    </alternativeName>
</protein>
<proteinExistence type="inferred from homology"/>
<sequence>MVLEYQQREGKGSSSKSMPPDSSSTTIHTCSEAQTGEDKGLLDPHLSVLELLSKTGHSPSPMGQNLVTSIDISGNHNVNDSISGSWQAIQPLDLGASFIPERCSSQTTNGSILSSSDTSEEEQELLQAPAADIINIIKQGQEGANVVSPSHPFKQLQKIISLPLPGKEKTPFNEQDDDGDEDEAFEEDSVTITKSLTSSTNSFVMPKLSLTQKNPVFRLLILGRTGSSFYQSIPKEYQSLFELPKYHDSATFPQYTGIVIIFQELREMVSLLNRIVQYSQGKPVIPICQPGQVIQVKNVLKSFLRNKLVKLLFPPVVVTNKRDLKKMFQRLQDLSLEYGEDVNEEDNDDEAIHTKSRSYCRNKKAENSKKKSPKSNKKPKRKKQKFFTSWFTWGISITIGISFGCCVTYFVTAAYEHQTVKSLSLRPSILASLLSLDSSSDTINTPATASPSSTEQFLWFDKGTLQINFHSDGFIMKSLTIIKETWGKMNTFVLHALSKPLKFLENLNKSSEFSIDESNRILALGYILL</sequence>
<comment type="function">
    <text evidence="1">Mitophagy-specific receptor that recruits the autophagic machinery to mitochondria and regulates selective degradation of mitochondria. Mitophagy contributes to regulate mitochondrial quantity and quality by eliminating the mitochondria to a basal level to fulfill cellular energy requirements and preventing excess ROS production. Recruits ATG11 to the surface of mitochondria. Also promotes autophagy-dependent peroxisome degradation (By similarity).</text>
</comment>
<comment type="subunit">
    <text evidence="1">interacts with ATG8 and ATG11.</text>
</comment>
<comment type="subcellular location">
    <subcellularLocation>
        <location evidence="1">Mitochondrion outer membrane</location>
        <topology evidence="1">Single-pass membrane protein</topology>
    </subcellularLocation>
    <subcellularLocation>
        <location evidence="1">Vacuole membrane</location>
        <topology evidence="1">Single-pass membrane protein</topology>
    </subcellularLocation>
    <subcellularLocation>
        <location evidence="1">Preautophagosomal structure membrane</location>
        <topology evidence="1">Single-pass membrane protein</topology>
    </subcellularLocation>
    <text evidence="1">Is recruited to the preautophagosomal structure during mitophagy and imported into the vacuole along with mitochondria during starvation.</text>
</comment>
<comment type="PTM">
    <text evidence="1">Phosphorylation of Ser-114 and Ser-119 are critically important for mitophagy and for the ATG11-ATG32 interaction. Phosphorylation depends on both HOG1 and PBS2.</text>
</comment>
<comment type="similarity">
    <text evidence="5">Belongs to the ATG32 family.</text>
</comment>
<accession>A6ZVD0</accession>
<name>ATG32_YEAS7</name>